<gene>
    <name evidence="1" type="primary">rpoB</name>
    <name type="ordered locus">GM21_3335</name>
</gene>
<name>RPOB_GEOSM</name>
<reference key="1">
    <citation type="submission" date="2009-07" db="EMBL/GenBank/DDBJ databases">
        <title>Complete sequence of Geobacter sp. M21.</title>
        <authorList>
            <consortium name="US DOE Joint Genome Institute"/>
            <person name="Lucas S."/>
            <person name="Copeland A."/>
            <person name="Lapidus A."/>
            <person name="Glavina del Rio T."/>
            <person name="Dalin E."/>
            <person name="Tice H."/>
            <person name="Bruce D."/>
            <person name="Goodwin L."/>
            <person name="Pitluck S."/>
            <person name="Saunders E."/>
            <person name="Brettin T."/>
            <person name="Detter J.C."/>
            <person name="Han C."/>
            <person name="Larimer F."/>
            <person name="Land M."/>
            <person name="Hauser L."/>
            <person name="Kyrpides N."/>
            <person name="Ovchinnikova G."/>
            <person name="Lovley D."/>
        </authorList>
    </citation>
    <scope>NUCLEOTIDE SEQUENCE [LARGE SCALE GENOMIC DNA]</scope>
    <source>
        <strain>M21</strain>
    </source>
</reference>
<organism>
    <name type="scientific">Geobacter sp. (strain M21)</name>
    <dbReference type="NCBI Taxonomy" id="443144"/>
    <lineage>
        <taxon>Bacteria</taxon>
        <taxon>Pseudomonadati</taxon>
        <taxon>Thermodesulfobacteriota</taxon>
        <taxon>Desulfuromonadia</taxon>
        <taxon>Geobacterales</taxon>
        <taxon>Geobacteraceae</taxon>
        <taxon>Geobacter</taxon>
    </lineage>
</organism>
<keyword id="KW-0240">DNA-directed RNA polymerase</keyword>
<keyword id="KW-0548">Nucleotidyltransferase</keyword>
<keyword id="KW-0804">Transcription</keyword>
<keyword id="KW-0808">Transferase</keyword>
<accession>C6E4R4</accession>
<comment type="function">
    <text evidence="1">DNA-dependent RNA polymerase catalyzes the transcription of DNA into RNA using the four ribonucleoside triphosphates as substrates.</text>
</comment>
<comment type="catalytic activity">
    <reaction evidence="1">
        <text>RNA(n) + a ribonucleoside 5'-triphosphate = RNA(n+1) + diphosphate</text>
        <dbReference type="Rhea" id="RHEA:21248"/>
        <dbReference type="Rhea" id="RHEA-COMP:14527"/>
        <dbReference type="Rhea" id="RHEA-COMP:17342"/>
        <dbReference type="ChEBI" id="CHEBI:33019"/>
        <dbReference type="ChEBI" id="CHEBI:61557"/>
        <dbReference type="ChEBI" id="CHEBI:140395"/>
        <dbReference type="EC" id="2.7.7.6"/>
    </reaction>
</comment>
<comment type="subunit">
    <text evidence="1">The RNAP catalytic core consists of 2 alpha, 1 beta, 1 beta' and 1 omega subunit. When a sigma factor is associated with the core the holoenzyme is formed, which can initiate transcription.</text>
</comment>
<comment type="similarity">
    <text evidence="1">Belongs to the RNA polymerase beta chain family.</text>
</comment>
<feature type="chain" id="PRO_1000214479" description="DNA-directed RNA polymerase subunit beta">
    <location>
        <begin position="1"/>
        <end position="1371"/>
    </location>
</feature>
<proteinExistence type="inferred from homology"/>
<dbReference type="EC" id="2.7.7.6" evidence="1"/>
<dbReference type="EMBL" id="CP001661">
    <property type="protein sequence ID" value="ACT19360.1"/>
    <property type="molecule type" value="Genomic_DNA"/>
</dbReference>
<dbReference type="SMR" id="C6E4R4"/>
<dbReference type="STRING" id="443144.GM21_3335"/>
<dbReference type="KEGG" id="gem:GM21_3335"/>
<dbReference type="eggNOG" id="COG0085">
    <property type="taxonomic scope" value="Bacteria"/>
</dbReference>
<dbReference type="HOGENOM" id="CLU_000524_4_3_7"/>
<dbReference type="OrthoDB" id="9803954at2"/>
<dbReference type="GO" id="GO:0000428">
    <property type="term" value="C:DNA-directed RNA polymerase complex"/>
    <property type="evidence" value="ECO:0007669"/>
    <property type="project" value="UniProtKB-KW"/>
</dbReference>
<dbReference type="GO" id="GO:0003677">
    <property type="term" value="F:DNA binding"/>
    <property type="evidence" value="ECO:0007669"/>
    <property type="project" value="UniProtKB-UniRule"/>
</dbReference>
<dbReference type="GO" id="GO:0003899">
    <property type="term" value="F:DNA-directed RNA polymerase activity"/>
    <property type="evidence" value="ECO:0007669"/>
    <property type="project" value="UniProtKB-UniRule"/>
</dbReference>
<dbReference type="GO" id="GO:0032549">
    <property type="term" value="F:ribonucleoside binding"/>
    <property type="evidence" value="ECO:0007669"/>
    <property type="project" value="InterPro"/>
</dbReference>
<dbReference type="GO" id="GO:0006351">
    <property type="term" value="P:DNA-templated transcription"/>
    <property type="evidence" value="ECO:0007669"/>
    <property type="project" value="UniProtKB-UniRule"/>
</dbReference>
<dbReference type="CDD" id="cd00653">
    <property type="entry name" value="RNA_pol_B_RPB2"/>
    <property type="match status" value="1"/>
</dbReference>
<dbReference type="FunFam" id="2.40.50.100:FF:000006">
    <property type="entry name" value="DNA-directed RNA polymerase subunit beta"/>
    <property type="match status" value="1"/>
</dbReference>
<dbReference type="FunFam" id="3.90.1800.10:FF:000001">
    <property type="entry name" value="DNA-directed RNA polymerase subunit beta"/>
    <property type="match status" value="1"/>
</dbReference>
<dbReference type="Gene3D" id="2.40.50.100">
    <property type="match status" value="1"/>
</dbReference>
<dbReference type="Gene3D" id="2.40.50.150">
    <property type="match status" value="1"/>
</dbReference>
<dbReference type="Gene3D" id="3.90.1100.10">
    <property type="match status" value="2"/>
</dbReference>
<dbReference type="Gene3D" id="2.30.150.10">
    <property type="entry name" value="DNA-directed RNA polymerase, beta subunit, external 1 domain"/>
    <property type="match status" value="1"/>
</dbReference>
<dbReference type="Gene3D" id="2.40.270.10">
    <property type="entry name" value="DNA-directed RNA polymerase, subunit 2, domain 6"/>
    <property type="match status" value="1"/>
</dbReference>
<dbReference type="Gene3D" id="3.90.1800.10">
    <property type="entry name" value="RNA polymerase alpha subunit dimerisation domain"/>
    <property type="match status" value="1"/>
</dbReference>
<dbReference type="Gene3D" id="3.90.1110.10">
    <property type="entry name" value="RNA polymerase Rpb2, domain 2"/>
    <property type="match status" value="1"/>
</dbReference>
<dbReference type="HAMAP" id="MF_01321">
    <property type="entry name" value="RNApol_bact_RpoB"/>
    <property type="match status" value="1"/>
</dbReference>
<dbReference type="InterPro" id="IPR042107">
    <property type="entry name" value="DNA-dir_RNA_pol_bsu_ext_1_sf"/>
</dbReference>
<dbReference type="InterPro" id="IPR019462">
    <property type="entry name" value="DNA-dir_RNA_pol_bsu_external_1"/>
</dbReference>
<dbReference type="InterPro" id="IPR015712">
    <property type="entry name" value="DNA-dir_RNA_pol_su2"/>
</dbReference>
<dbReference type="InterPro" id="IPR007120">
    <property type="entry name" value="DNA-dir_RNAP_su2_dom"/>
</dbReference>
<dbReference type="InterPro" id="IPR037033">
    <property type="entry name" value="DNA-dir_RNAP_su2_hyb_sf"/>
</dbReference>
<dbReference type="InterPro" id="IPR010243">
    <property type="entry name" value="RNA_pol_bsu_bac"/>
</dbReference>
<dbReference type="InterPro" id="IPR007121">
    <property type="entry name" value="RNA_pol_bsu_CS"/>
</dbReference>
<dbReference type="InterPro" id="IPR007644">
    <property type="entry name" value="RNA_pol_bsu_protrusion"/>
</dbReference>
<dbReference type="InterPro" id="IPR007642">
    <property type="entry name" value="RNA_pol_Rpb2_2"/>
</dbReference>
<dbReference type="InterPro" id="IPR037034">
    <property type="entry name" value="RNA_pol_Rpb2_2_sf"/>
</dbReference>
<dbReference type="InterPro" id="IPR007645">
    <property type="entry name" value="RNA_pol_Rpb2_3"/>
</dbReference>
<dbReference type="InterPro" id="IPR007641">
    <property type="entry name" value="RNA_pol_Rpb2_7"/>
</dbReference>
<dbReference type="InterPro" id="IPR014724">
    <property type="entry name" value="RNA_pol_RPB2_OB-fold"/>
</dbReference>
<dbReference type="NCBIfam" id="NF001616">
    <property type="entry name" value="PRK00405.1"/>
    <property type="match status" value="1"/>
</dbReference>
<dbReference type="NCBIfam" id="TIGR02013">
    <property type="entry name" value="rpoB"/>
    <property type="match status" value="1"/>
</dbReference>
<dbReference type="PANTHER" id="PTHR20856">
    <property type="entry name" value="DNA-DIRECTED RNA POLYMERASE I SUBUNIT 2"/>
    <property type="match status" value="1"/>
</dbReference>
<dbReference type="Pfam" id="PF04563">
    <property type="entry name" value="RNA_pol_Rpb2_1"/>
    <property type="match status" value="1"/>
</dbReference>
<dbReference type="Pfam" id="PF04561">
    <property type="entry name" value="RNA_pol_Rpb2_2"/>
    <property type="match status" value="2"/>
</dbReference>
<dbReference type="Pfam" id="PF04565">
    <property type="entry name" value="RNA_pol_Rpb2_3"/>
    <property type="match status" value="1"/>
</dbReference>
<dbReference type="Pfam" id="PF10385">
    <property type="entry name" value="RNA_pol_Rpb2_45"/>
    <property type="match status" value="1"/>
</dbReference>
<dbReference type="Pfam" id="PF00562">
    <property type="entry name" value="RNA_pol_Rpb2_6"/>
    <property type="match status" value="1"/>
</dbReference>
<dbReference type="Pfam" id="PF04560">
    <property type="entry name" value="RNA_pol_Rpb2_7"/>
    <property type="match status" value="1"/>
</dbReference>
<dbReference type="SUPFAM" id="SSF64484">
    <property type="entry name" value="beta and beta-prime subunits of DNA dependent RNA-polymerase"/>
    <property type="match status" value="1"/>
</dbReference>
<dbReference type="PROSITE" id="PS01166">
    <property type="entry name" value="RNA_POL_BETA"/>
    <property type="match status" value="1"/>
</dbReference>
<sequence>MAYSIANNPLLRKNFAKIHKIIDIPNLIDIQKNSYKRFLQLDTPVDARKNSGLEAVFRSVFPIRDFSDTASLEYVSYSLGAPKYDVEECHQRGMTFAAPMKVKVRLVVWDVAKDPGTRSIRDIKEQEVYFGEIPLMTDNGTFIINGTERVIVSQLHRSPGVFYDHDKGKTHSSGKVLYSARVIPYRGSWLDFEFDHKDILYVRIDRRRKMPATVLLKALGYSNDALINYFYKSEDVKVGDNGSMTKIADAELLSNQKATADIVDPATGEVILKANRKFTKAAIRKMSEHGIKEIPISEEEVVGKVASHDIYDPATGEIIVECNEELTQAKLEEIIQKGITTFQVLFIDNLHVTSSFRDTILIDKIGSTDEALIEIYRRLRPGDPPTLKSALVLFENLFFNAERYDLSAVGRLKLNYKLGVDVPLDCMTLTREDILEVVRYLIELKNGKGNIDDIDHLGNRRVRAVGELLENQYRIGLVRMERAIKERMSLQEVENLMPHDLINSKPVSAVVKEFFGSSQLSQFMDQTNPLSEVTHKRRLSALGPGGLTRERAGFEVRDVHPTHYGRVCPIETPEGPNIGLIASLSTYARINEHGFVETPYRVVKEGRVTDEVRFFSALEEEGHAIAQANAEIDETGRFAADYISARKSGEFVLVGRDELELMDVAPMQLVSVAASLIPFLENDDANRALMGSNMQRQAVPLLRADSPLVGTGMERVVARDSGVSLVARHNGVVESVDASRIVVKIDEDQYDATGTGVDIYNLIKFARSNQNTCINQRPLVKVGDHVTAGDIIADGPSTDMGELALGQNVLIAFMPWGGYNYEDSILISERLVKDDRYTSIHIEEFEAVARDTKLGKEEITSDIPNLGEETLKDLDESGIIRIGAEVRPGDILVGKITPKGETQLSPEEKLLRAIFGEKAGDVRDTSLRVPPGVEGTVIGAKIFSRKGADKDARTEIIEKAEEMRLRKDEQDEIRIIRDSAIGKLKKLLVGKTAAVKIEGTDGKVLIPKGAAITEEMLKSFSMDRWDEISIADDDTVDEKVAQTLSTLNQQIDIIKYVFDDKVQKLRRGDDLPPGVIKMVKVYIAIKRKLQVGDKMAGRHGNKGVVSRILPEEDMPYMEDGRPVEIVLNPLGVPSRMNVGQILEMHLGWAAKGLGWKIEEFLDKNAPHDEIKRFLKGAYNNPDMDRFLDKLEGEELLNVAKRLKRGVPMSSPVFEGASEESIQSMLSHAGFSTTGQVTLFDGKSGDKFMHQVTVGIMYFLKLHHLVDDKIHARSIGPYSLVTQQPLGGKAQFGGQRLGEMEVWAMEAYGAAYALQEFLTVKSDDVAGRTRMYEAIVKGKHTLEPGLPESFNVLIKELQSLGLDVELLEGDED</sequence>
<evidence type="ECO:0000255" key="1">
    <source>
        <dbReference type="HAMAP-Rule" id="MF_01321"/>
    </source>
</evidence>
<protein>
    <recommendedName>
        <fullName evidence="1">DNA-directed RNA polymerase subunit beta</fullName>
        <shortName evidence="1">RNAP subunit beta</shortName>
        <ecNumber evidence="1">2.7.7.6</ecNumber>
    </recommendedName>
    <alternativeName>
        <fullName evidence="1">RNA polymerase subunit beta</fullName>
    </alternativeName>
    <alternativeName>
        <fullName evidence="1">Transcriptase subunit beta</fullName>
    </alternativeName>
</protein>